<reference key="1">
    <citation type="journal article" date="1984" name="Proc. Natl. Acad. Sci. U.S.A.">
        <title>Reaction center and light-harvesting I genes from Rhodopseudomonas capsulata.</title>
        <authorList>
            <person name="Youvan D.C."/>
            <person name="Alberti M."/>
            <person name="Begusch H."/>
            <person name="Bylina E.J."/>
            <person name="Hearst J.E."/>
        </authorList>
    </citation>
    <scope>NUCLEOTIDE SEQUENCE [GENOMIC DNA]</scope>
</reference>
<reference key="2">
    <citation type="journal article" date="1984" name="Cell">
        <title>Nucleotide and deduced polypeptide sequences of the photosynthetic reaction-center, B870 antenna, and flanking polypeptides from R. capsulata.</title>
        <authorList>
            <person name="Youvan D.C."/>
            <person name="Bylina E.J."/>
            <person name="Alberti M."/>
            <person name="Begusch H."/>
            <person name="Hearst J.E."/>
        </authorList>
    </citation>
    <scope>NUCLEOTIDE SEQUENCE [GENOMIC DNA]</scope>
</reference>
<reference key="3">
    <citation type="journal article" date="1985" name="FEBS Lett.">
        <title>The complete amino acid sequence of the large bacteriochlorophyll-binding polypeptide B870-alpha from the light-harvesting complex B870 of Rhodopseudomonas capsulata.</title>
        <authorList>
            <person name="Tadros M.H."/>
            <person name="Frank G."/>
            <person name="Zuber H."/>
            <person name="Drews G."/>
        </authorList>
    </citation>
    <scope>PROTEIN SEQUENCE</scope>
</reference>
<name>LHA1_RHOCA</name>
<dbReference type="EMBL" id="AH000921">
    <property type="protein sequence ID" value="AAA26173.1"/>
    <property type="molecule type" value="Genomic_DNA"/>
</dbReference>
<dbReference type="EMBL" id="Z11165">
    <property type="protein sequence ID" value="CAA77553.1"/>
    <property type="molecule type" value="Genomic_DNA"/>
</dbReference>
<dbReference type="PIR" id="A03449">
    <property type="entry name" value="LBRFAC"/>
</dbReference>
<dbReference type="RefSeq" id="WP_013066436.1">
    <property type="nucleotide sequence ID" value="NZ_CP061202.1"/>
</dbReference>
<dbReference type="PDB" id="7YML">
    <property type="method" value="EM"/>
    <property type="resolution" value="2.60 A"/>
    <property type="chains" value="A/D/F/I/K/O/Q/S/V/Y=1-58"/>
</dbReference>
<dbReference type="PDB" id="8B64">
    <property type="method" value="EM"/>
    <property type="resolution" value="2.59 A"/>
    <property type="chains" value="a/b/d/e/f/g/i/j/k/n/o/r/s/t/u=1-58"/>
</dbReference>
<dbReference type="PDBsum" id="7YML"/>
<dbReference type="PDBsum" id="8B64"/>
<dbReference type="EMDB" id="EMD-15862"/>
<dbReference type="EMDB" id="EMD-33931"/>
<dbReference type="SMR" id="P02948"/>
<dbReference type="GeneID" id="31489638"/>
<dbReference type="OMA" id="NWLEGPR"/>
<dbReference type="GO" id="GO:0019866">
    <property type="term" value="C:organelle inner membrane"/>
    <property type="evidence" value="ECO:0007669"/>
    <property type="project" value="InterPro"/>
</dbReference>
<dbReference type="GO" id="GO:0005886">
    <property type="term" value="C:plasma membrane"/>
    <property type="evidence" value="ECO:0007669"/>
    <property type="project" value="UniProtKB-SubCell"/>
</dbReference>
<dbReference type="GO" id="GO:0030077">
    <property type="term" value="C:plasma membrane light-harvesting complex"/>
    <property type="evidence" value="ECO:0007669"/>
    <property type="project" value="InterPro"/>
</dbReference>
<dbReference type="GO" id="GO:0042314">
    <property type="term" value="F:bacteriochlorophyll binding"/>
    <property type="evidence" value="ECO:0007669"/>
    <property type="project" value="UniProtKB-KW"/>
</dbReference>
<dbReference type="GO" id="GO:0045156">
    <property type="term" value="F:electron transporter, transferring electrons within the cyclic electron transport pathway of photosynthesis activity"/>
    <property type="evidence" value="ECO:0007669"/>
    <property type="project" value="InterPro"/>
</dbReference>
<dbReference type="GO" id="GO:0046872">
    <property type="term" value="F:metal ion binding"/>
    <property type="evidence" value="ECO:0007669"/>
    <property type="project" value="UniProtKB-KW"/>
</dbReference>
<dbReference type="GO" id="GO:0019684">
    <property type="term" value="P:photosynthesis, light reaction"/>
    <property type="evidence" value="ECO:0007669"/>
    <property type="project" value="InterPro"/>
</dbReference>
<dbReference type="Gene3D" id="4.10.220.20">
    <property type="entry name" value="Light-harvesting complex"/>
    <property type="match status" value="1"/>
</dbReference>
<dbReference type="InterPro" id="IPR000066">
    <property type="entry name" value="Antenna_a/b"/>
</dbReference>
<dbReference type="InterPro" id="IPR018332">
    <property type="entry name" value="Antenna_alpha"/>
</dbReference>
<dbReference type="InterPro" id="IPR002361">
    <property type="entry name" value="Antenna_alpha_CS"/>
</dbReference>
<dbReference type="InterPro" id="IPR035889">
    <property type="entry name" value="Light-harvesting_complex"/>
</dbReference>
<dbReference type="NCBIfam" id="NF040861">
    <property type="entry name" value="pufA_517_ASD"/>
    <property type="match status" value="1"/>
</dbReference>
<dbReference type="Pfam" id="PF00556">
    <property type="entry name" value="LHC"/>
    <property type="match status" value="1"/>
</dbReference>
<dbReference type="PRINTS" id="PR00673">
    <property type="entry name" value="LIGHTHARVSTA"/>
</dbReference>
<dbReference type="SUPFAM" id="SSF56918">
    <property type="entry name" value="Light-harvesting complex subunits"/>
    <property type="match status" value="1"/>
</dbReference>
<dbReference type="PROSITE" id="PS00968">
    <property type="entry name" value="ANTENNA_COMP_ALPHA"/>
    <property type="match status" value="1"/>
</dbReference>
<comment type="function">
    <text>Antenna complexes are light-harvesting systems, which transfer the excitation energy to the reaction centers.</text>
</comment>
<comment type="subunit">
    <text>The core complex is formed by different alpha and beta chains, binding bacteriochlorophyll molecules, and arranged most probably in tetrameric structures disposed around the reaction center. The non-pigmented gamma chains may constitute additional components.</text>
</comment>
<comment type="subcellular location">
    <subcellularLocation>
        <location>Cell inner membrane</location>
        <topology>Single-pass type II membrane protein</topology>
    </subcellularLocation>
</comment>
<comment type="similarity">
    <text evidence="2">Belongs to the antenna complex alpha subunit family.</text>
</comment>
<gene>
    <name type="primary">pufA</name>
</gene>
<feature type="chain" id="PRO_0000099790" description="Light-harvesting protein B-870 alpha chain">
    <location>
        <begin position="1"/>
        <end position="58"/>
    </location>
</feature>
<feature type="topological domain" description="Cytoplasmic" evidence="1">
    <location>
        <begin position="1"/>
        <end position="15"/>
    </location>
</feature>
<feature type="transmembrane region" description="Helical" evidence="1">
    <location>
        <begin position="16"/>
        <end position="36"/>
    </location>
</feature>
<feature type="topological domain" description="Periplasmic" evidence="1">
    <location>
        <begin position="37"/>
        <end position="58"/>
    </location>
</feature>
<feature type="binding site" description="axial binding residue" evidence="1">
    <location>
        <position position="32"/>
    </location>
    <ligand>
        <name>a bacteriochlorophyll</name>
        <dbReference type="ChEBI" id="CHEBI:38201"/>
    </ligand>
    <ligandPart>
        <name>Mg</name>
        <dbReference type="ChEBI" id="CHEBI:25107"/>
    </ligandPart>
</feature>
<feature type="helix" evidence="3">
    <location>
        <begin position="4"/>
        <end position="9"/>
    </location>
</feature>
<feature type="helix" evidence="3">
    <location>
        <begin position="13"/>
        <end position="37"/>
    </location>
</feature>
<feature type="helix" evidence="3">
    <location>
        <begin position="39"/>
        <end position="41"/>
    </location>
</feature>
<feature type="helix" evidence="3">
    <location>
        <begin position="45"/>
        <end position="51"/>
    </location>
</feature>
<organism>
    <name type="scientific">Rhodobacter capsulatus</name>
    <name type="common">Rhodopseudomonas capsulata</name>
    <dbReference type="NCBI Taxonomy" id="1061"/>
    <lineage>
        <taxon>Bacteria</taxon>
        <taxon>Pseudomonadati</taxon>
        <taxon>Pseudomonadota</taxon>
        <taxon>Alphaproteobacteria</taxon>
        <taxon>Rhodobacterales</taxon>
        <taxon>Rhodobacter group</taxon>
        <taxon>Rhodobacter</taxon>
    </lineage>
</organism>
<evidence type="ECO:0000255" key="1"/>
<evidence type="ECO:0000305" key="2"/>
<evidence type="ECO:0007829" key="3">
    <source>
        <dbReference type="PDB" id="8B64"/>
    </source>
</evidence>
<proteinExistence type="evidence at protein level"/>
<accession>P02948</accession>
<keyword id="KW-0002">3D-structure</keyword>
<keyword id="KW-0042">Antenna complex</keyword>
<keyword id="KW-0076">Bacteriochlorophyll</keyword>
<keyword id="KW-0997">Cell inner membrane</keyword>
<keyword id="KW-1003">Cell membrane</keyword>
<keyword id="KW-0148">Chlorophyll</keyword>
<keyword id="KW-0157">Chromophore</keyword>
<keyword id="KW-0903">Direct protein sequencing</keyword>
<keyword id="KW-0437">Light-harvesting polypeptide</keyword>
<keyword id="KW-0460">Magnesium</keyword>
<keyword id="KW-0472">Membrane</keyword>
<keyword id="KW-0479">Metal-binding</keyword>
<keyword id="KW-0812">Transmembrane</keyword>
<keyword id="KW-1133">Transmembrane helix</keyword>
<protein>
    <recommendedName>
        <fullName>Light-harvesting protein B-870 alpha chain</fullName>
    </recommendedName>
    <alternativeName>
        <fullName>Antenna pigment protein alpha chain</fullName>
    </alternativeName>
    <alternativeName>
        <fullName>LH-1</fullName>
    </alternativeName>
</protein>
<sequence length="58" mass="6594">MSKFYKIWLVFDPRRVFVAQGVFLFLLAVLIHLILLSTPAFNWLTVATAKHGYVAAAQ</sequence>